<reference key="1">
    <citation type="journal article" date="2005" name="Nat. Biotechnol.">
        <title>The complete genome sequence of the meat-borne lactic acid bacterium Lactobacillus sakei 23K.</title>
        <authorList>
            <person name="Chaillou S."/>
            <person name="Champomier-Verges M.-C."/>
            <person name="Cornet M."/>
            <person name="Crutz-Le Coq A.-M."/>
            <person name="Dudez A.-M."/>
            <person name="Martin V."/>
            <person name="Beaufils S."/>
            <person name="Darbon-Rongere E."/>
            <person name="Bossy R."/>
            <person name="Loux V."/>
            <person name="Zagorec M."/>
        </authorList>
    </citation>
    <scope>NUCLEOTIDE SEQUENCE [LARGE SCALE GENOMIC DNA]</scope>
    <source>
        <strain>23K</strain>
    </source>
</reference>
<accession>Q38VT0</accession>
<organism>
    <name type="scientific">Latilactobacillus sakei subsp. sakei (strain 23K)</name>
    <name type="common">Lactobacillus sakei subsp. sakei</name>
    <dbReference type="NCBI Taxonomy" id="314315"/>
    <lineage>
        <taxon>Bacteria</taxon>
        <taxon>Bacillati</taxon>
        <taxon>Bacillota</taxon>
        <taxon>Bacilli</taxon>
        <taxon>Lactobacillales</taxon>
        <taxon>Lactobacillaceae</taxon>
        <taxon>Latilactobacillus</taxon>
    </lineage>
</organism>
<dbReference type="EC" id="6.1.1.3" evidence="1"/>
<dbReference type="EMBL" id="CR936503">
    <property type="protein sequence ID" value="CAI55703.1"/>
    <property type="molecule type" value="Genomic_DNA"/>
</dbReference>
<dbReference type="RefSeq" id="WP_011375093.1">
    <property type="nucleotide sequence ID" value="NC_007576.1"/>
</dbReference>
<dbReference type="SMR" id="Q38VT0"/>
<dbReference type="STRING" id="314315.LCA_1400"/>
<dbReference type="KEGG" id="lsa:LCA_1400"/>
<dbReference type="eggNOG" id="COG0441">
    <property type="taxonomic scope" value="Bacteria"/>
</dbReference>
<dbReference type="HOGENOM" id="CLU_008554_0_1_9"/>
<dbReference type="OrthoDB" id="9802304at2"/>
<dbReference type="Proteomes" id="UP000002707">
    <property type="component" value="Chromosome"/>
</dbReference>
<dbReference type="GO" id="GO:0005737">
    <property type="term" value="C:cytoplasm"/>
    <property type="evidence" value="ECO:0007669"/>
    <property type="project" value="UniProtKB-SubCell"/>
</dbReference>
<dbReference type="GO" id="GO:0005524">
    <property type="term" value="F:ATP binding"/>
    <property type="evidence" value="ECO:0007669"/>
    <property type="project" value="UniProtKB-UniRule"/>
</dbReference>
<dbReference type="GO" id="GO:0140096">
    <property type="term" value="F:catalytic activity, acting on a protein"/>
    <property type="evidence" value="ECO:0007669"/>
    <property type="project" value="UniProtKB-ARBA"/>
</dbReference>
<dbReference type="GO" id="GO:0046872">
    <property type="term" value="F:metal ion binding"/>
    <property type="evidence" value="ECO:0007669"/>
    <property type="project" value="UniProtKB-KW"/>
</dbReference>
<dbReference type="GO" id="GO:0004829">
    <property type="term" value="F:threonine-tRNA ligase activity"/>
    <property type="evidence" value="ECO:0007669"/>
    <property type="project" value="UniProtKB-UniRule"/>
</dbReference>
<dbReference type="GO" id="GO:0016740">
    <property type="term" value="F:transferase activity"/>
    <property type="evidence" value="ECO:0007669"/>
    <property type="project" value="UniProtKB-ARBA"/>
</dbReference>
<dbReference type="GO" id="GO:0000049">
    <property type="term" value="F:tRNA binding"/>
    <property type="evidence" value="ECO:0007669"/>
    <property type="project" value="UniProtKB-KW"/>
</dbReference>
<dbReference type="GO" id="GO:0006435">
    <property type="term" value="P:threonyl-tRNA aminoacylation"/>
    <property type="evidence" value="ECO:0007669"/>
    <property type="project" value="UniProtKB-UniRule"/>
</dbReference>
<dbReference type="CDD" id="cd01667">
    <property type="entry name" value="TGS_ThrRS"/>
    <property type="match status" value="1"/>
</dbReference>
<dbReference type="CDD" id="cd00860">
    <property type="entry name" value="ThrRS_anticodon"/>
    <property type="match status" value="1"/>
</dbReference>
<dbReference type="CDD" id="cd00771">
    <property type="entry name" value="ThrRS_core"/>
    <property type="match status" value="1"/>
</dbReference>
<dbReference type="FunFam" id="3.10.20.30:FF:000005">
    <property type="entry name" value="Threonine--tRNA ligase"/>
    <property type="match status" value="1"/>
</dbReference>
<dbReference type="FunFam" id="3.30.930.10:FF:000002">
    <property type="entry name" value="Threonine--tRNA ligase"/>
    <property type="match status" value="1"/>
</dbReference>
<dbReference type="FunFam" id="3.40.50.800:FF:000001">
    <property type="entry name" value="Threonine--tRNA ligase"/>
    <property type="match status" value="1"/>
</dbReference>
<dbReference type="Gene3D" id="3.10.20.30">
    <property type="match status" value="1"/>
</dbReference>
<dbReference type="Gene3D" id="3.30.54.20">
    <property type="match status" value="1"/>
</dbReference>
<dbReference type="Gene3D" id="3.40.50.800">
    <property type="entry name" value="Anticodon-binding domain"/>
    <property type="match status" value="1"/>
</dbReference>
<dbReference type="Gene3D" id="3.30.930.10">
    <property type="entry name" value="Bira Bifunctional Protein, Domain 2"/>
    <property type="match status" value="1"/>
</dbReference>
<dbReference type="Gene3D" id="3.30.980.10">
    <property type="entry name" value="Threonyl-trna Synthetase, Chain A, domain 2"/>
    <property type="match status" value="1"/>
</dbReference>
<dbReference type="HAMAP" id="MF_00184">
    <property type="entry name" value="Thr_tRNA_synth"/>
    <property type="match status" value="1"/>
</dbReference>
<dbReference type="InterPro" id="IPR002314">
    <property type="entry name" value="aa-tRNA-synt_IIb"/>
</dbReference>
<dbReference type="InterPro" id="IPR006195">
    <property type="entry name" value="aa-tRNA-synth_II"/>
</dbReference>
<dbReference type="InterPro" id="IPR045864">
    <property type="entry name" value="aa-tRNA-synth_II/BPL/LPL"/>
</dbReference>
<dbReference type="InterPro" id="IPR004154">
    <property type="entry name" value="Anticodon-bd"/>
</dbReference>
<dbReference type="InterPro" id="IPR036621">
    <property type="entry name" value="Anticodon-bd_dom_sf"/>
</dbReference>
<dbReference type="InterPro" id="IPR012675">
    <property type="entry name" value="Beta-grasp_dom_sf"/>
</dbReference>
<dbReference type="InterPro" id="IPR004095">
    <property type="entry name" value="TGS"/>
</dbReference>
<dbReference type="InterPro" id="IPR012676">
    <property type="entry name" value="TGS-like"/>
</dbReference>
<dbReference type="InterPro" id="IPR002320">
    <property type="entry name" value="Thr-tRNA-ligase_IIa"/>
</dbReference>
<dbReference type="InterPro" id="IPR018163">
    <property type="entry name" value="Thr/Ala-tRNA-synth_IIc_edit"/>
</dbReference>
<dbReference type="InterPro" id="IPR047246">
    <property type="entry name" value="ThrRS_anticodon"/>
</dbReference>
<dbReference type="InterPro" id="IPR033728">
    <property type="entry name" value="ThrRS_core"/>
</dbReference>
<dbReference type="InterPro" id="IPR012947">
    <property type="entry name" value="tRNA_SAD"/>
</dbReference>
<dbReference type="NCBIfam" id="TIGR00418">
    <property type="entry name" value="thrS"/>
    <property type="match status" value="1"/>
</dbReference>
<dbReference type="PANTHER" id="PTHR11451:SF56">
    <property type="entry name" value="THREONINE--TRNA LIGASE 1"/>
    <property type="match status" value="1"/>
</dbReference>
<dbReference type="PANTHER" id="PTHR11451">
    <property type="entry name" value="THREONINE-TRNA LIGASE"/>
    <property type="match status" value="1"/>
</dbReference>
<dbReference type="Pfam" id="PF03129">
    <property type="entry name" value="HGTP_anticodon"/>
    <property type="match status" value="1"/>
</dbReference>
<dbReference type="Pfam" id="PF02824">
    <property type="entry name" value="TGS"/>
    <property type="match status" value="1"/>
</dbReference>
<dbReference type="Pfam" id="PF00587">
    <property type="entry name" value="tRNA-synt_2b"/>
    <property type="match status" value="1"/>
</dbReference>
<dbReference type="PRINTS" id="PR01047">
    <property type="entry name" value="TRNASYNTHTHR"/>
</dbReference>
<dbReference type="SMART" id="SM00863">
    <property type="entry name" value="tRNA_SAD"/>
    <property type="match status" value="1"/>
</dbReference>
<dbReference type="SUPFAM" id="SSF52954">
    <property type="entry name" value="Class II aaRS ABD-related"/>
    <property type="match status" value="1"/>
</dbReference>
<dbReference type="SUPFAM" id="SSF55681">
    <property type="entry name" value="Class II aaRS and biotin synthetases"/>
    <property type="match status" value="1"/>
</dbReference>
<dbReference type="SUPFAM" id="SSF81271">
    <property type="entry name" value="TGS-like"/>
    <property type="match status" value="1"/>
</dbReference>
<dbReference type="SUPFAM" id="SSF55186">
    <property type="entry name" value="ThrRS/AlaRS common domain"/>
    <property type="match status" value="1"/>
</dbReference>
<dbReference type="PROSITE" id="PS50862">
    <property type="entry name" value="AA_TRNA_LIGASE_II"/>
    <property type="match status" value="1"/>
</dbReference>
<dbReference type="PROSITE" id="PS51880">
    <property type="entry name" value="TGS"/>
    <property type="match status" value="1"/>
</dbReference>
<sequence>MAEIQLTFPDGAQKTFEQATSLLDVAKSISTSLAKKAIAGKFNGEVVDLQQPLLEDGAIEIITKDDQAVNLTATWHTAAFVLAATLSQHYPEMQFGEVTATEDGFYYDTDNEAGQVAVTDLPEIKTEMAKLIQSGEAISRVSVSKDDAKKLFAGQTYKLALLDEVEADQVLVYQLGDYSDFSLAPMLGKVSDVKFFELLSVAGAYWQGKSSNQMLQRIYGTAYPKQEELDADLKRRQEAKERDHRVIGNQLDLFFVDPKVGAGLPYWLPNGATIRRSIERYIIDKEVANGYEHVYTPILANLDLYKQSGHWDHYREDMFPPMDMGDGEMLELRPMNCPSHIQVYKHHPRSYRELPIRIAELGMMHRYEKSGALSGLQRVREMTLNDGHTFVRPDQIQDEFKSILGLMIDVYADFNINDYTFRLSYRDPANTEKYFDDDEMWNKAQAMLKGAMDDLGLDYVEAEGEAAFYGPKLDVQTKTAMGNEETLSTIQLDFMLPERFDLHYVGEDGEMHRPVMIHRGLVSTMERFTAYLTEIYKGAFPTWLAPTQAVIIPVKNDLHYDYAKNIKDEMIKRGLRVRIDDRNEKMGYKIREAQTSKIPYTLVVGDQELAQATVSVRKYGEENAVEEASDMFINAIVAEVGNYSRDGKQHTKKINL</sequence>
<feature type="chain" id="PRO_1000020414" description="Threonine--tRNA ligase">
    <location>
        <begin position="1"/>
        <end position="656"/>
    </location>
</feature>
<feature type="domain" description="TGS" evidence="2">
    <location>
        <begin position="1"/>
        <end position="63"/>
    </location>
</feature>
<feature type="region of interest" description="Catalytic" evidence="1">
    <location>
        <begin position="243"/>
        <end position="541"/>
    </location>
</feature>
<feature type="binding site" evidence="1">
    <location>
        <position position="337"/>
    </location>
    <ligand>
        <name>Zn(2+)</name>
        <dbReference type="ChEBI" id="CHEBI:29105"/>
    </ligand>
</feature>
<feature type="binding site" evidence="1">
    <location>
        <position position="388"/>
    </location>
    <ligand>
        <name>Zn(2+)</name>
        <dbReference type="ChEBI" id="CHEBI:29105"/>
    </ligand>
</feature>
<feature type="binding site" evidence="1">
    <location>
        <position position="518"/>
    </location>
    <ligand>
        <name>Zn(2+)</name>
        <dbReference type="ChEBI" id="CHEBI:29105"/>
    </ligand>
</feature>
<evidence type="ECO:0000255" key="1">
    <source>
        <dbReference type="HAMAP-Rule" id="MF_00184"/>
    </source>
</evidence>
<evidence type="ECO:0000255" key="2">
    <source>
        <dbReference type="PROSITE-ProRule" id="PRU01228"/>
    </source>
</evidence>
<proteinExistence type="inferred from homology"/>
<keyword id="KW-0030">Aminoacyl-tRNA synthetase</keyword>
<keyword id="KW-0067">ATP-binding</keyword>
<keyword id="KW-0963">Cytoplasm</keyword>
<keyword id="KW-0436">Ligase</keyword>
<keyword id="KW-0479">Metal-binding</keyword>
<keyword id="KW-0547">Nucleotide-binding</keyword>
<keyword id="KW-0648">Protein biosynthesis</keyword>
<keyword id="KW-1185">Reference proteome</keyword>
<keyword id="KW-0694">RNA-binding</keyword>
<keyword id="KW-0820">tRNA-binding</keyword>
<keyword id="KW-0862">Zinc</keyword>
<name>SYT_LATSS</name>
<protein>
    <recommendedName>
        <fullName evidence="1">Threonine--tRNA ligase</fullName>
        <ecNumber evidence="1">6.1.1.3</ecNumber>
    </recommendedName>
    <alternativeName>
        <fullName evidence="1">Threonyl-tRNA synthetase</fullName>
        <shortName evidence="1">ThrRS</shortName>
    </alternativeName>
</protein>
<gene>
    <name evidence="1" type="primary">thrS</name>
    <name type="ordered locus">LCA_1400</name>
</gene>
<comment type="function">
    <text evidence="1">Catalyzes the attachment of threonine to tRNA(Thr) in a two-step reaction: L-threonine is first activated by ATP to form Thr-AMP and then transferred to the acceptor end of tRNA(Thr). Also edits incorrectly charged L-seryl-tRNA(Thr).</text>
</comment>
<comment type="catalytic activity">
    <reaction evidence="1">
        <text>tRNA(Thr) + L-threonine + ATP = L-threonyl-tRNA(Thr) + AMP + diphosphate + H(+)</text>
        <dbReference type="Rhea" id="RHEA:24624"/>
        <dbReference type="Rhea" id="RHEA-COMP:9670"/>
        <dbReference type="Rhea" id="RHEA-COMP:9704"/>
        <dbReference type="ChEBI" id="CHEBI:15378"/>
        <dbReference type="ChEBI" id="CHEBI:30616"/>
        <dbReference type="ChEBI" id="CHEBI:33019"/>
        <dbReference type="ChEBI" id="CHEBI:57926"/>
        <dbReference type="ChEBI" id="CHEBI:78442"/>
        <dbReference type="ChEBI" id="CHEBI:78534"/>
        <dbReference type="ChEBI" id="CHEBI:456215"/>
        <dbReference type="EC" id="6.1.1.3"/>
    </reaction>
</comment>
<comment type="cofactor">
    <cofactor evidence="1">
        <name>Zn(2+)</name>
        <dbReference type="ChEBI" id="CHEBI:29105"/>
    </cofactor>
    <text evidence="1">Binds 1 zinc ion per subunit.</text>
</comment>
<comment type="subunit">
    <text evidence="1">Homodimer.</text>
</comment>
<comment type="subcellular location">
    <subcellularLocation>
        <location evidence="1">Cytoplasm</location>
    </subcellularLocation>
</comment>
<comment type="similarity">
    <text evidence="1">Belongs to the class-II aminoacyl-tRNA synthetase family.</text>
</comment>